<proteinExistence type="inferred from homology"/>
<sequence length="632" mass="69339">MISPLLQHISSPQKLRSLSLDQLPLLCDEIRNRIIATLSLTGGHLASNLGIVELTVALHYVFASPEDQFIFDVGHQAYVHKLLTGRNTEAFSNIRHDNGLSGFTSPQESNHDIFFSGHAGNALSLALGLAKGASHGSSHILPILGDAAFSCGLTLEALNNVPSDLSKFIIVLNDNQMSISENVGNIPQGISQWIQPPKFDKIFQKIHSWMRKIPGFSRQKSELLHKVDIALKSLSHPLFEQFGIHYVGPFDGHNIKKLIPALEAVKGLPYPVLFHVCTAKGNGLAEAEKDPALYHGVKAYFKNHSPKKKPLSSEVKTPSSFPQHVGHILCQLGEKHPRLQVVTPAMSLGSCLEDFRKQFPDRFTDVGIAEGHAVTFSAGIARSGTPVVCSIYSTFLNRAMDNVFHDVCMQELPVIFAIDRAGLAFHDGRSHHGIYDLGFLCSMPNMVVCQPRNASVLERLLFSSLLWKSPCAIRYPNLSTRKEVSNPSFSPIFPGEAEVLCQGDDLLLIALGHMCDTALAVKEQLLDHGISTTVVDPIFIKPLDTELLQTLLSHHSKVVVLEEHSIHGGLSAEFLLFLNNHNLKTDVLSLGIPDIFIPHGNPETILNMIGLTSDQITLKILAHFNFSAPIPI</sequence>
<comment type="function">
    <text evidence="1">Catalyzes the acyloin condensation reaction between C atoms 2 and 3 of pyruvate and glyceraldehyde 3-phosphate to yield 1-deoxy-D-xylulose-5-phosphate (DXP).</text>
</comment>
<comment type="catalytic activity">
    <reaction evidence="1">
        <text>D-glyceraldehyde 3-phosphate + pyruvate + H(+) = 1-deoxy-D-xylulose 5-phosphate + CO2</text>
        <dbReference type="Rhea" id="RHEA:12605"/>
        <dbReference type="ChEBI" id="CHEBI:15361"/>
        <dbReference type="ChEBI" id="CHEBI:15378"/>
        <dbReference type="ChEBI" id="CHEBI:16526"/>
        <dbReference type="ChEBI" id="CHEBI:57792"/>
        <dbReference type="ChEBI" id="CHEBI:59776"/>
        <dbReference type="EC" id="2.2.1.7"/>
    </reaction>
</comment>
<comment type="cofactor">
    <cofactor evidence="1">
        <name>Mg(2+)</name>
        <dbReference type="ChEBI" id="CHEBI:18420"/>
    </cofactor>
    <text evidence="1">Binds 1 Mg(2+) ion per subunit.</text>
</comment>
<comment type="cofactor">
    <cofactor evidence="1">
        <name>thiamine diphosphate</name>
        <dbReference type="ChEBI" id="CHEBI:58937"/>
    </cofactor>
    <text evidence="1">Binds 1 thiamine pyrophosphate per subunit.</text>
</comment>
<comment type="pathway">
    <text evidence="1">Metabolic intermediate biosynthesis; 1-deoxy-D-xylulose 5-phosphate biosynthesis; 1-deoxy-D-xylulose 5-phosphate from D-glyceraldehyde 3-phosphate and pyruvate: step 1/1.</text>
</comment>
<comment type="subunit">
    <text evidence="1">Homodimer.</text>
</comment>
<comment type="similarity">
    <text evidence="1">Belongs to the transketolase family. DXPS subfamily.</text>
</comment>
<evidence type="ECO:0000255" key="1">
    <source>
        <dbReference type="HAMAP-Rule" id="MF_00315"/>
    </source>
</evidence>
<accession>Q9PK62</accession>
<reference key="1">
    <citation type="journal article" date="2000" name="Nucleic Acids Res.">
        <title>Genome sequences of Chlamydia trachomatis MoPn and Chlamydia pneumoniae AR39.</title>
        <authorList>
            <person name="Read T.D."/>
            <person name="Brunham R.C."/>
            <person name="Shen C."/>
            <person name="Gill S.R."/>
            <person name="Heidelberg J.F."/>
            <person name="White O."/>
            <person name="Hickey E.K."/>
            <person name="Peterson J.D."/>
            <person name="Utterback T.R."/>
            <person name="Berry K.J."/>
            <person name="Bass S."/>
            <person name="Linher K.D."/>
            <person name="Weidman J.F."/>
            <person name="Khouri H.M."/>
            <person name="Craven B."/>
            <person name="Bowman C."/>
            <person name="Dodson R.J."/>
            <person name="Gwinn M.L."/>
            <person name="Nelson W.C."/>
            <person name="DeBoy R.T."/>
            <person name="Kolonay J.F."/>
            <person name="McClarty G."/>
            <person name="Salzberg S.L."/>
            <person name="Eisen J.A."/>
            <person name="Fraser C.M."/>
        </authorList>
    </citation>
    <scope>NUCLEOTIDE SEQUENCE [LARGE SCALE GENOMIC DNA]</scope>
    <source>
        <strain>MoPn / Nigg</strain>
    </source>
</reference>
<keyword id="KW-0414">Isoprene biosynthesis</keyword>
<keyword id="KW-0460">Magnesium</keyword>
<keyword id="KW-0479">Metal-binding</keyword>
<keyword id="KW-0784">Thiamine biosynthesis</keyword>
<keyword id="KW-0786">Thiamine pyrophosphate</keyword>
<keyword id="KW-0808">Transferase</keyword>
<organism>
    <name type="scientific">Chlamydia muridarum (strain MoPn / Nigg)</name>
    <dbReference type="NCBI Taxonomy" id="243161"/>
    <lineage>
        <taxon>Bacteria</taxon>
        <taxon>Pseudomonadati</taxon>
        <taxon>Chlamydiota</taxon>
        <taxon>Chlamydiia</taxon>
        <taxon>Chlamydiales</taxon>
        <taxon>Chlamydiaceae</taxon>
        <taxon>Chlamydia/Chlamydophila group</taxon>
        <taxon>Chlamydia</taxon>
    </lineage>
</organism>
<name>DXS_CHLMU</name>
<feature type="chain" id="PRO_0000189100" description="1-deoxy-D-xylulose-5-phosphate synthase">
    <location>
        <begin position="1"/>
        <end position="632"/>
    </location>
</feature>
<feature type="binding site" evidence="1">
    <location>
        <position position="75"/>
    </location>
    <ligand>
        <name>thiamine diphosphate</name>
        <dbReference type="ChEBI" id="CHEBI:58937"/>
    </ligand>
</feature>
<feature type="binding site" evidence="1">
    <location>
        <begin position="117"/>
        <end position="119"/>
    </location>
    <ligand>
        <name>thiamine diphosphate</name>
        <dbReference type="ChEBI" id="CHEBI:58937"/>
    </ligand>
</feature>
<feature type="binding site" evidence="1">
    <location>
        <position position="146"/>
    </location>
    <ligand>
        <name>Mg(2+)</name>
        <dbReference type="ChEBI" id="CHEBI:18420"/>
    </ligand>
</feature>
<feature type="binding site" evidence="1">
    <location>
        <begin position="147"/>
        <end position="148"/>
    </location>
    <ligand>
        <name>thiamine diphosphate</name>
        <dbReference type="ChEBI" id="CHEBI:58937"/>
    </ligand>
</feature>
<feature type="binding site" evidence="1">
    <location>
        <position position="175"/>
    </location>
    <ligand>
        <name>Mg(2+)</name>
        <dbReference type="ChEBI" id="CHEBI:18420"/>
    </ligand>
</feature>
<feature type="binding site" evidence="1">
    <location>
        <position position="175"/>
    </location>
    <ligand>
        <name>thiamine diphosphate</name>
        <dbReference type="ChEBI" id="CHEBI:58937"/>
    </ligand>
</feature>
<feature type="binding site" evidence="1">
    <location>
        <position position="370"/>
    </location>
    <ligand>
        <name>thiamine diphosphate</name>
        <dbReference type="ChEBI" id="CHEBI:58937"/>
    </ligand>
</feature>
<dbReference type="EC" id="2.2.1.7" evidence="1"/>
<dbReference type="EMBL" id="AE002160">
    <property type="protein sequence ID" value="AAF39439.1"/>
    <property type="molecule type" value="Genomic_DNA"/>
</dbReference>
<dbReference type="PIR" id="E81684">
    <property type="entry name" value="E81684"/>
</dbReference>
<dbReference type="RefSeq" id="WP_010230977.1">
    <property type="nucleotide sequence ID" value="NZ_CP063055.1"/>
</dbReference>
<dbReference type="SMR" id="Q9PK62"/>
<dbReference type="GeneID" id="1245970"/>
<dbReference type="KEGG" id="cmu:TC_0608"/>
<dbReference type="eggNOG" id="COG1154">
    <property type="taxonomic scope" value="Bacteria"/>
</dbReference>
<dbReference type="HOGENOM" id="CLU_009227_1_4_0"/>
<dbReference type="OrthoDB" id="9803371at2"/>
<dbReference type="UniPathway" id="UPA00064">
    <property type="reaction ID" value="UER00091"/>
</dbReference>
<dbReference type="Proteomes" id="UP000000800">
    <property type="component" value="Chromosome"/>
</dbReference>
<dbReference type="GO" id="GO:0005829">
    <property type="term" value="C:cytosol"/>
    <property type="evidence" value="ECO:0007669"/>
    <property type="project" value="TreeGrafter"/>
</dbReference>
<dbReference type="GO" id="GO:0008661">
    <property type="term" value="F:1-deoxy-D-xylulose-5-phosphate synthase activity"/>
    <property type="evidence" value="ECO:0007669"/>
    <property type="project" value="UniProtKB-UniRule"/>
</dbReference>
<dbReference type="GO" id="GO:0000287">
    <property type="term" value="F:magnesium ion binding"/>
    <property type="evidence" value="ECO:0007669"/>
    <property type="project" value="UniProtKB-UniRule"/>
</dbReference>
<dbReference type="GO" id="GO:0030976">
    <property type="term" value="F:thiamine pyrophosphate binding"/>
    <property type="evidence" value="ECO:0007669"/>
    <property type="project" value="UniProtKB-UniRule"/>
</dbReference>
<dbReference type="GO" id="GO:0052865">
    <property type="term" value="P:1-deoxy-D-xylulose 5-phosphate biosynthetic process"/>
    <property type="evidence" value="ECO:0007669"/>
    <property type="project" value="UniProtKB-UniPathway"/>
</dbReference>
<dbReference type="GO" id="GO:0019288">
    <property type="term" value="P:isopentenyl diphosphate biosynthetic process, methylerythritol 4-phosphate pathway"/>
    <property type="evidence" value="ECO:0007669"/>
    <property type="project" value="TreeGrafter"/>
</dbReference>
<dbReference type="GO" id="GO:0016114">
    <property type="term" value="P:terpenoid biosynthetic process"/>
    <property type="evidence" value="ECO:0007669"/>
    <property type="project" value="UniProtKB-UniRule"/>
</dbReference>
<dbReference type="GO" id="GO:0009228">
    <property type="term" value="P:thiamine biosynthetic process"/>
    <property type="evidence" value="ECO:0007669"/>
    <property type="project" value="UniProtKB-UniRule"/>
</dbReference>
<dbReference type="CDD" id="cd02007">
    <property type="entry name" value="TPP_DXS"/>
    <property type="match status" value="1"/>
</dbReference>
<dbReference type="CDD" id="cd07033">
    <property type="entry name" value="TPP_PYR_DXS_TK_like"/>
    <property type="match status" value="1"/>
</dbReference>
<dbReference type="FunFam" id="3.40.50.920:FF:000002">
    <property type="entry name" value="1-deoxy-D-xylulose-5-phosphate synthase"/>
    <property type="match status" value="1"/>
</dbReference>
<dbReference type="Gene3D" id="3.40.50.920">
    <property type="match status" value="1"/>
</dbReference>
<dbReference type="Gene3D" id="3.40.50.970">
    <property type="match status" value="2"/>
</dbReference>
<dbReference type="HAMAP" id="MF_00315">
    <property type="entry name" value="DXP_synth"/>
    <property type="match status" value="1"/>
</dbReference>
<dbReference type="InterPro" id="IPR005477">
    <property type="entry name" value="Dxylulose-5-P_synthase"/>
</dbReference>
<dbReference type="InterPro" id="IPR029061">
    <property type="entry name" value="THDP-binding"/>
</dbReference>
<dbReference type="InterPro" id="IPR009014">
    <property type="entry name" value="Transketo_C/PFOR_II"/>
</dbReference>
<dbReference type="InterPro" id="IPR005475">
    <property type="entry name" value="Transketolase-like_Pyr-bd"/>
</dbReference>
<dbReference type="InterPro" id="IPR033248">
    <property type="entry name" value="Transketolase_C"/>
</dbReference>
<dbReference type="NCBIfam" id="TIGR00204">
    <property type="entry name" value="dxs"/>
    <property type="match status" value="1"/>
</dbReference>
<dbReference type="NCBIfam" id="NF003933">
    <property type="entry name" value="PRK05444.2-2"/>
    <property type="match status" value="1"/>
</dbReference>
<dbReference type="PANTHER" id="PTHR43322">
    <property type="entry name" value="1-D-DEOXYXYLULOSE 5-PHOSPHATE SYNTHASE-RELATED"/>
    <property type="match status" value="1"/>
</dbReference>
<dbReference type="PANTHER" id="PTHR43322:SF5">
    <property type="entry name" value="1-DEOXY-D-XYLULOSE-5-PHOSPHATE SYNTHASE, CHLOROPLASTIC"/>
    <property type="match status" value="1"/>
</dbReference>
<dbReference type="Pfam" id="PF13292">
    <property type="entry name" value="DXP_synthase_N"/>
    <property type="match status" value="1"/>
</dbReference>
<dbReference type="Pfam" id="PF02779">
    <property type="entry name" value="Transket_pyr"/>
    <property type="match status" value="1"/>
</dbReference>
<dbReference type="Pfam" id="PF02780">
    <property type="entry name" value="Transketolase_C"/>
    <property type="match status" value="1"/>
</dbReference>
<dbReference type="SMART" id="SM00861">
    <property type="entry name" value="Transket_pyr"/>
    <property type="match status" value="1"/>
</dbReference>
<dbReference type="SUPFAM" id="SSF52518">
    <property type="entry name" value="Thiamin diphosphate-binding fold (THDP-binding)"/>
    <property type="match status" value="2"/>
</dbReference>
<dbReference type="SUPFAM" id="SSF52922">
    <property type="entry name" value="TK C-terminal domain-like"/>
    <property type="match status" value="1"/>
</dbReference>
<gene>
    <name evidence="1" type="primary">dxs</name>
    <name type="ordered locus">TC_0608</name>
</gene>
<protein>
    <recommendedName>
        <fullName evidence="1">1-deoxy-D-xylulose-5-phosphate synthase</fullName>
        <ecNumber evidence="1">2.2.1.7</ecNumber>
    </recommendedName>
    <alternativeName>
        <fullName evidence="1">1-deoxyxylulose-5-phosphate synthase</fullName>
        <shortName evidence="1">DXP synthase</shortName>
        <shortName evidence="1">DXPS</shortName>
    </alternativeName>
</protein>